<evidence type="ECO:0000250" key="1">
    <source>
        <dbReference type="UniProtKB" id="P32461"/>
    </source>
</evidence>
<evidence type="ECO:0000250" key="2">
    <source>
        <dbReference type="UniProtKB" id="Q9CR25"/>
    </source>
</evidence>
<evidence type="ECO:0000269" key="3">
    <source>
    </source>
</evidence>
<evidence type="ECO:0000269" key="4">
    <source>
    </source>
</evidence>
<evidence type="ECO:0000303" key="5">
    <source>
    </source>
</evidence>
<evidence type="ECO:0000305" key="6"/>
<evidence type="ECO:0000305" key="7">
    <source>
    </source>
</evidence>
<evidence type="ECO:0007744" key="8">
    <source>
    </source>
</evidence>
<evidence type="ECO:0007744" key="9">
    <source>
    </source>
</evidence>
<evidence type="ECO:0007744" key="10">
    <source>
    </source>
</evidence>
<evidence type="ECO:0007744" key="11">
    <source>
    </source>
</evidence>
<evidence type="ECO:0007744" key="12">
    <source>
    </source>
</evidence>
<evidence type="ECO:0007744" key="13">
    <source>
    </source>
</evidence>
<gene>
    <name type="primary">DPH2</name>
    <name type="synonym">DPH2L2</name>
</gene>
<reference key="1">
    <citation type="journal article" date="1998" name="Genomics">
        <title>Cloning and localization of a human diphthamide biosynthesis-like protein-2 gene, DPH2L2.</title>
        <authorList>
            <person name="Schultz D.C."/>
            <person name="Balasara B.R."/>
            <person name="Testa J.R."/>
            <person name="Godwin A.K."/>
        </authorList>
    </citation>
    <scope>NUCLEOTIDE SEQUENCE [MRNA] (ISOFORM 1)</scope>
    <scope>TISSUE SPECIFICITY</scope>
</reference>
<reference key="2">
    <citation type="journal article" date="2004" name="Nat. Genet.">
        <title>Complete sequencing and characterization of 21,243 full-length human cDNAs.</title>
        <authorList>
            <person name="Ota T."/>
            <person name="Suzuki Y."/>
            <person name="Nishikawa T."/>
            <person name="Otsuki T."/>
            <person name="Sugiyama T."/>
            <person name="Irie R."/>
            <person name="Wakamatsu A."/>
            <person name="Hayashi K."/>
            <person name="Sato H."/>
            <person name="Nagai K."/>
            <person name="Kimura K."/>
            <person name="Makita H."/>
            <person name="Sekine M."/>
            <person name="Obayashi M."/>
            <person name="Nishi T."/>
            <person name="Shibahara T."/>
            <person name="Tanaka T."/>
            <person name="Ishii S."/>
            <person name="Yamamoto J."/>
            <person name="Saito K."/>
            <person name="Kawai Y."/>
            <person name="Isono Y."/>
            <person name="Nakamura Y."/>
            <person name="Nagahari K."/>
            <person name="Murakami K."/>
            <person name="Yasuda T."/>
            <person name="Iwayanagi T."/>
            <person name="Wagatsuma M."/>
            <person name="Shiratori A."/>
            <person name="Sudo H."/>
            <person name="Hosoiri T."/>
            <person name="Kaku Y."/>
            <person name="Kodaira H."/>
            <person name="Kondo H."/>
            <person name="Sugawara M."/>
            <person name="Takahashi M."/>
            <person name="Kanda K."/>
            <person name="Yokoi T."/>
            <person name="Furuya T."/>
            <person name="Kikkawa E."/>
            <person name="Omura Y."/>
            <person name="Abe K."/>
            <person name="Kamihara K."/>
            <person name="Katsuta N."/>
            <person name="Sato K."/>
            <person name="Tanikawa M."/>
            <person name="Yamazaki M."/>
            <person name="Ninomiya K."/>
            <person name="Ishibashi T."/>
            <person name="Yamashita H."/>
            <person name="Murakawa K."/>
            <person name="Fujimori K."/>
            <person name="Tanai H."/>
            <person name="Kimata M."/>
            <person name="Watanabe M."/>
            <person name="Hiraoka S."/>
            <person name="Chiba Y."/>
            <person name="Ishida S."/>
            <person name="Ono Y."/>
            <person name="Takiguchi S."/>
            <person name="Watanabe S."/>
            <person name="Yosida M."/>
            <person name="Hotuta T."/>
            <person name="Kusano J."/>
            <person name="Kanehori K."/>
            <person name="Takahashi-Fujii A."/>
            <person name="Hara H."/>
            <person name="Tanase T.-O."/>
            <person name="Nomura Y."/>
            <person name="Togiya S."/>
            <person name="Komai F."/>
            <person name="Hara R."/>
            <person name="Takeuchi K."/>
            <person name="Arita M."/>
            <person name="Imose N."/>
            <person name="Musashino K."/>
            <person name="Yuuki H."/>
            <person name="Oshima A."/>
            <person name="Sasaki N."/>
            <person name="Aotsuka S."/>
            <person name="Yoshikawa Y."/>
            <person name="Matsunawa H."/>
            <person name="Ichihara T."/>
            <person name="Shiohata N."/>
            <person name="Sano S."/>
            <person name="Moriya S."/>
            <person name="Momiyama H."/>
            <person name="Satoh N."/>
            <person name="Takami S."/>
            <person name="Terashima Y."/>
            <person name="Suzuki O."/>
            <person name="Nakagawa S."/>
            <person name="Senoh A."/>
            <person name="Mizoguchi H."/>
            <person name="Goto Y."/>
            <person name="Shimizu F."/>
            <person name="Wakebe H."/>
            <person name="Hishigaki H."/>
            <person name="Watanabe T."/>
            <person name="Sugiyama A."/>
            <person name="Takemoto M."/>
            <person name="Kawakami B."/>
            <person name="Yamazaki M."/>
            <person name="Watanabe K."/>
            <person name="Kumagai A."/>
            <person name="Itakura S."/>
            <person name="Fukuzumi Y."/>
            <person name="Fujimori Y."/>
            <person name="Komiyama M."/>
            <person name="Tashiro H."/>
            <person name="Tanigami A."/>
            <person name="Fujiwara T."/>
            <person name="Ono T."/>
            <person name="Yamada K."/>
            <person name="Fujii Y."/>
            <person name="Ozaki K."/>
            <person name="Hirao M."/>
            <person name="Ohmori Y."/>
            <person name="Kawabata A."/>
            <person name="Hikiji T."/>
            <person name="Kobatake N."/>
            <person name="Inagaki H."/>
            <person name="Ikema Y."/>
            <person name="Okamoto S."/>
            <person name="Okitani R."/>
            <person name="Kawakami T."/>
            <person name="Noguchi S."/>
            <person name="Itoh T."/>
            <person name="Shigeta K."/>
            <person name="Senba T."/>
            <person name="Matsumura K."/>
            <person name="Nakajima Y."/>
            <person name="Mizuno T."/>
            <person name="Morinaga M."/>
            <person name="Sasaki M."/>
            <person name="Togashi T."/>
            <person name="Oyama M."/>
            <person name="Hata H."/>
            <person name="Watanabe M."/>
            <person name="Komatsu T."/>
            <person name="Mizushima-Sugano J."/>
            <person name="Satoh T."/>
            <person name="Shirai Y."/>
            <person name="Takahashi Y."/>
            <person name="Nakagawa K."/>
            <person name="Okumura K."/>
            <person name="Nagase T."/>
            <person name="Nomura N."/>
            <person name="Kikuchi H."/>
            <person name="Masuho Y."/>
            <person name="Yamashita R."/>
            <person name="Nakai K."/>
            <person name="Yada T."/>
            <person name="Nakamura Y."/>
            <person name="Ohara O."/>
            <person name="Isogai T."/>
            <person name="Sugano S."/>
        </authorList>
    </citation>
    <scope>NUCLEOTIDE SEQUENCE [LARGE SCALE MRNA] (ISOFORMS 1 AND 3)</scope>
    <source>
        <tissue>Tongue</tissue>
    </source>
</reference>
<reference key="3">
    <citation type="submission" date="2003-05" db="EMBL/GenBank/DDBJ databases">
        <title>Cloning of human full-length CDSs in BD Creator(TM) system donor vector.</title>
        <authorList>
            <person name="Kalnine N."/>
            <person name="Chen X."/>
            <person name="Rolfs A."/>
            <person name="Halleck A."/>
            <person name="Hines L."/>
            <person name="Eisenstein S."/>
            <person name="Koundinya M."/>
            <person name="Raphael J."/>
            <person name="Moreira D."/>
            <person name="Kelley T."/>
            <person name="LaBaer J."/>
            <person name="Lin Y."/>
            <person name="Phelan M."/>
            <person name="Farmer A."/>
        </authorList>
    </citation>
    <scope>NUCLEOTIDE SEQUENCE [LARGE SCALE MRNA] (ISOFORM 1)</scope>
</reference>
<reference key="4">
    <citation type="journal article" date="2006" name="Nature">
        <title>The DNA sequence and biological annotation of human chromosome 1.</title>
        <authorList>
            <person name="Gregory S.G."/>
            <person name="Barlow K.F."/>
            <person name="McLay K.E."/>
            <person name="Kaul R."/>
            <person name="Swarbreck D."/>
            <person name="Dunham A."/>
            <person name="Scott C.E."/>
            <person name="Howe K.L."/>
            <person name="Woodfine K."/>
            <person name="Spencer C.C.A."/>
            <person name="Jones M.C."/>
            <person name="Gillson C."/>
            <person name="Searle S."/>
            <person name="Zhou Y."/>
            <person name="Kokocinski F."/>
            <person name="McDonald L."/>
            <person name="Evans R."/>
            <person name="Phillips K."/>
            <person name="Atkinson A."/>
            <person name="Cooper R."/>
            <person name="Jones C."/>
            <person name="Hall R.E."/>
            <person name="Andrews T.D."/>
            <person name="Lloyd C."/>
            <person name="Ainscough R."/>
            <person name="Almeida J.P."/>
            <person name="Ambrose K.D."/>
            <person name="Anderson F."/>
            <person name="Andrew R.W."/>
            <person name="Ashwell R.I.S."/>
            <person name="Aubin K."/>
            <person name="Babbage A.K."/>
            <person name="Bagguley C.L."/>
            <person name="Bailey J."/>
            <person name="Beasley H."/>
            <person name="Bethel G."/>
            <person name="Bird C.P."/>
            <person name="Bray-Allen S."/>
            <person name="Brown J.Y."/>
            <person name="Brown A.J."/>
            <person name="Buckley D."/>
            <person name="Burton J."/>
            <person name="Bye J."/>
            <person name="Carder C."/>
            <person name="Chapman J.C."/>
            <person name="Clark S.Y."/>
            <person name="Clarke G."/>
            <person name="Clee C."/>
            <person name="Cobley V."/>
            <person name="Collier R.E."/>
            <person name="Corby N."/>
            <person name="Coville G.J."/>
            <person name="Davies J."/>
            <person name="Deadman R."/>
            <person name="Dunn M."/>
            <person name="Earthrowl M."/>
            <person name="Ellington A.G."/>
            <person name="Errington H."/>
            <person name="Frankish A."/>
            <person name="Frankland J."/>
            <person name="French L."/>
            <person name="Garner P."/>
            <person name="Garnett J."/>
            <person name="Gay L."/>
            <person name="Ghori M.R.J."/>
            <person name="Gibson R."/>
            <person name="Gilby L.M."/>
            <person name="Gillett W."/>
            <person name="Glithero R.J."/>
            <person name="Grafham D.V."/>
            <person name="Griffiths C."/>
            <person name="Griffiths-Jones S."/>
            <person name="Grocock R."/>
            <person name="Hammond S."/>
            <person name="Harrison E.S.I."/>
            <person name="Hart E."/>
            <person name="Haugen E."/>
            <person name="Heath P.D."/>
            <person name="Holmes S."/>
            <person name="Holt K."/>
            <person name="Howden P.J."/>
            <person name="Hunt A.R."/>
            <person name="Hunt S.E."/>
            <person name="Hunter G."/>
            <person name="Isherwood J."/>
            <person name="James R."/>
            <person name="Johnson C."/>
            <person name="Johnson D."/>
            <person name="Joy A."/>
            <person name="Kay M."/>
            <person name="Kershaw J.K."/>
            <person name="Kibukawa M."/>
            <person name="Kimberley A.M."/>
            <person name="King A."/>
            <person name="Knights A.J."/>
            <person name="Lad H."/>
            <person name="Laird G."/>
            <person name="Lawlor S."/>
            <person name="Leongamornlert D.A."/>
            <person name="Lloyd D.M."/>
            <person name="Loveland J."/>
            <person name="Lovell J."/>
            <person name="Lush M.J."/>
            <person name="Lyne R."/>
            <person name="Martin S."/>
            <person name="Mashreghi-Mohammadi M."/>
            <person name="Matthews L."/>
            <person name="Matthews N.S.W."/>
            <person name="McLaren S."/>
            <person name="Milne S."/>
            <person name="Mistry S."/>
            <person name="Moore M.J.F."/>
            <person name="Nickerson T."/>
            <person name="O'Dell C.N."/>
            <person name="Oliver K."/>
            <person name="Palmeiri A."/>
            <person name="Palmer S.A."/>
            <person name="Parker A."/>
            <person name="Patel D."/>
            <person name="Pearce A.V."/>
            <person name="Peck A.I."/>
            <person name="Pelan S."/>
            <person name="Phelps K."/>
            <person name="Phillimore B.J."/>
            <person name="Plumb R."/>
            <person name="Rajan J."/>
            <person name="Raymond C."/>
            <person name="Rouse G."/>
            <person name="Saenphimmachak C."/>
            <person name="Sehra H.K."/>
            <person name="Sheridan E."/>
            <person name="Shownkeen R."/>
            <person name="Sims S."/>
            <person name="Skuce C.D."/>
            <person name="Smith M."/>
            <person name="Steward C."/>
            <person name="Subramanian S."/>
            <person name="Sycamore N."/>
            <person name="Tracey A."/>
            <person name="Tromans A."/>
            <person name="Van Helmond Z."/>
            <person name="Wall M."/>
            <person name="Wallis J.M."/>
            <person name="White S."/>
            <person name="Whitehead S.L."/>
            <person name="Wilkinson J.E."/>
            <person name="Willey D.L."/>
            <person name="Williams H."/>
            <person name="Wilming L."/>
            <person name="Wray P.W."/>
            <person name="Wu Z."/>
            <person name="Coulson A."/>
            <person name="Vaudin M."/>
            <person name="Sulston J.E."/>
            <person name="Durbin R.M."/>
            <person name="Hubbard T."/>
            <person name="Wooster R."/>
            <person name="Dunham I."/>
            <person name="Carter N.P."/>
            <person name="McVean G."/>
            <person name="Ross M.T."/>
            <person name="Harrow J."/>
            <person name="Olson M.V."/>
            <person name="Beck S."/>
            <person name="Rogers J."/>
            <person name="Bentley D.R."/>
        </authorList>
    </citation>
    <scope>NUCLEOTIDE SEQUENCE [LARGE SCALE GENOMIC DNA]</scope>
</reference>
<reference key="5">
    <citation type="submission" date="2005-09" db="EMBL/GenBank/DDBJ databases">
        <authorList>
            <person name="Mural R.J."/>
            <person name="Istrail S."/>
            <person name="Sutton G.G."/>
            <person name="Florea L."/>
            <person name="Halpern A.L."/>
            <person name="Mobarry C.M."/>
            <person name="Lippert R."/>
            <person name="Walenz B."/>
            <person name="Shatkay H."/>
            <person name="Dew I."/>
            <person name="Miller J.R."/>
            <person name="Flanigan M.J."/>
            <person name="Edwards N.J."/>
            <person name="Bolanos R."/>
            <person name="Fasulo D."/>
            <person name="Halldorsson B.V."/>
            <person name="Hannenhalli S."/>
            <person name="Turner R."/>
            <person name="Yooseph S."/>
            <person name="Lu F."/>
            <person name="Nusskern D.R."/>
            <person name="Shue B.C."/>
            <person name="Zheng X.H."/>
            <person name="Zhong F."/>
            <person name="Delcher A.L."/>
            <person name="Huson D.H."/>
            <person name="Kravitz S.A."/>
            <person name="Mouchard L."/>
            <person name="Reinert K."/>
            <person name="Remington K.A."/>
            <person name="Clark A.G."/>
            <person name="Waterman M.S."/>
            <person name="Eichler E.E."/>
            <person name="Adams M.D."/>
            <person name="Hunkapiller M.W."/>
            <person name="Myers E.W."/>
            <person name="Venter J.C."/>
        </authorList>
    </citation>
    <scope>NUCLEOTIDE SEQUENCE [LARGE SCALE GENOMIC DNA]</scope>
</reference>
<reference key="6">
    <citation type="journal article" date="2004" name="Genome Res.">
        <title>The status, quality, and expansion of the NIH full-length cDNA project: the Mammalian Gene Collection (MGC).</title>
        <authorList>
            <consortium name="The MGC Project Team"/>
        </authorList>
    </citation>
    <scope>NUCLEOTIDE SEQUENCE [LARGE SCALE MRNA] (ISOFORM 1)</scope>
    <source>
        <tissue>Colon</tissue>
        <tissue>Kidney</tissue>
        <tissue>Pancreas</tissue>
    </source>
</reference>
<reference key="7">
    <citation type="journal article" date="2008" name="Proc. Natl. Acad. Sci. U.S.A.">
        <title>A quantitative atlas of mitotic phosphorylation.</title>
        <authorList>
            <person name="Dephoure N."/>
            <person name="Zhou C."/>
            <person name="Villen J."/>
            <person name="Beausoleil S.A."/>
            <person name="Bakalarski C.E."/>
            <person name="Elledge S.J."/>
            <person name="Gygi S.P."/>
        </authorList>
    </citation>
    <scope>PHOSPHORYLATION [LARGE SCALE ANALYSIS] AT THR-435; SER-446 AND THR-467</scope>
    <scope>IDENTIFICATION BY MASS SPECTROMETRY [LARGE SCALE ANALYSIS]</scope>
    <source>
        <tissue>Cervix carcinoma</tissue>
    </source>
</reference>
<reference key="8">
    <citation type="journal article" date="2009" name="Sci. Signal.">
        <title>Quantitative phosphoproteomic analysis of T cell receptor signaling reveals system-wide modulation of protein-protein interactions.</title>
        <authorList>
            <person name="Mayya V."/>
            <person name="Lundgren D.H."/>
            <person name="Hwang S.-I."/>
            <person name="Rezaul K."/>
            <person name="Wu L."/>
            <person name="Eng J.K."/>
            <person name="Rodionov V."/>
            <person name="Han D.K."/>
        </authorList>
    </citation>
    <scope>PHOSPHORYLATION [LARGE SCALE ANALYSIS] AT SER-488</scope>
    <scope>IDENTIFICATION BY MASS SPECTROMETRY [LARGE SCALE ANALYSIS]</scope>
    <source>
        <tissue>Leukemic T-cell</tissue>
    </source>
</reference>
<reference key="9">
    <citation type="journal article" date="2010" name="Sci. Signal.">
        <title>Quantitative phosphoproteomics reveals widespread full phosphorylation site occupancy during mitosis.</title>
        <authorList>
            <person name="Olsen J.V."/>
            <person name="Vermeulen M."/>
            <person name="Santamaria A."/>
            <person name="Kumar C."/>
            <person name="Miller M.L."/>
            <person name="Jensen L.J."/>
            <person name="Gnad F."/>
            <person name="Cox J."/>
            <person name="Jensen T.S."/>
            <person name="Nigg E.A."/>
            <person name="Brunak S."/>
            <person name="Mann M."/>
        </authorList>
    </citation>
    <scope>PHOSPHORYLATION [LARGE SCALE ANALYSIS] AT SER-488</scope>
    <scope>IDENTIFICATION BY MASS SPECTROMETRY [LARGE SCALE ANALYSIS]</scope>
    <source>
        <tissue>Cervix carcinoma</tissue>
    </source>
</reference>
<reference key="10">
    <citation type="journal article" date="2011" name="BMC Syst. Biol.">
        <title>Initial characterization of the human central proteome.</title>
        <authorList>
            <person name="Burkard T.R."/>
            <person name="Planyavsky M."/>
            <person name="Kaupe I."/>
            <person name="Breitwieser F.P."/>
            <person name="Buerckstuemmer T."/>
            <person name="Bennett K.L."/>
            <person name="Superti-Furga G."/>
            <person name="Colinge J."/>
        </authorList>
    </citation>
    <scope>IDENTIFICATION BY MASS SPECTROMETRY [LARGE SCALE ANALYSIS]</scope>
</reference>
<reference key="11">
    <citation type="journal article" date="2011" name="Sci. Signal.">
        <title>System-wide temporal characterization of the proteome and phosphoproteome of human embryonic stem cell differentiation.</title>
        <authorList>
            <person name="Rigbolt K.T."/>
            <person name="Prokhorova T.A."/>
            <person name="Akimov V."/>
            <person name="Henningsen J."/>
            <person name="Johansen P.T."/>
            <person name="Kratchmarova I."/>
            <person name="Kassem M."/>
            <person name="Mann M."/>
            <person name="Olsen J.V."/>
            <person name="Blagoev B."/>
        </authorList>
    </citation>
    <scope>PHOSPHORYLATION [LARGE SCALE ANALYSIS] AT SER-488</scope>
    <scope>IDENTIFICATION BY MASS SPECTROMETRY [LARGE SCALE ANALYSIS]</scope>
</reference>
<reference key="12">
    <citation type="journal article" date="2012" name="Proc. Natl. Acad. Sci. U.S.A.">
        <title>N-terminal acetylome analyses and functional insights of the N-terminal acetyltransferase NatB.</title>
        <authorList>
            <person name="Van Damme P."/>
            <person name="Lasa M."/>
            <person name="Polevoda B."/>
            <person name="Gazquez C."/>
            <person name="Elosegui-Artola A."/>
            <person name="Kim D.S."/>
            <person name="De Juan-Pardo E."/>
            <person name="Demeyer K."/>
            <person name="Hole K."/>
            <person name="Larrea E."/>
            <person name="Timmerman E."/>
            <person name="Prieto J."/>
            <person name="Arnesen T."/>
            <person name="Sherman F."/>
            <person name="Gevaert K."/>
            <person name="Aldabe R."/>
        </authorList>
    </citation>
    <scope>ACETYLATION [LARGE SCALE ANALYSIS] AT MET-1</scope>
    <scope>IDENTIFICATION BY MASS SPECTROMETRY [LARGE SCALE ANALYSIS]</scope>
</reference>
<reference key="13">
    <citation type="journal article" date="2013" name="J. Proteome Res.">
        <title>Toward a comprehensive characterization of a human cancer cell phosphoproteome.</title>
        <authorList>
            <person name="Zhou H."/>
            <person name="Di Palma S."/>
            <person name="Preisinger C."/>
            <person name="Peng M."/>
            <person name="Polat A.N."/>
            <person name="Heck A.J."/>
            <person name="Mohammed S."/>
        </authorList>
    </citation>
    <scope>PHOSPHORYLATION [LARGE SCALE ANALYSIS] AT SER-7; SER-456 AND THR-467</scope>
    <scope>IDENTIFICATION BY MASS SPECTROMETRY [LARGE SCALE ANALYSIS]</scope>
    <source>
        <tissue>Cervix carcinoma</tissue>
        <tissue>Erythroleukemia</tissue>
    </source>
</reference>
<reference key="14">
    <citation type="journal article" date="2020" name="Eur. J. Hum. Genet.">
        <title>Diphthamide-deficiency syndrome: a novel human developmental disorder and ribosomopathy.</title>
        <authorList>
            <person name="Hawer H."/>
            <person name="Mendelsohn B.A."/>
            <person name="Mayer K."/>
            <person name="Kung A."/>
            <person name="Malhotra A."/>
            <person name="Tuupanen S."/>
            <person name="Schleit J."/>
            <person name="Brinkmann U."/>
            <person name="Schaffrath R."/>
        </authorList>
    </citation>
    <scope>FUNCTION</scope>
    <scope>PATHWAY</scope>
    <scope>INVOLVEMENT IN DEDSSH2</scope>
    <scope>VARIANTS DEDSSH2 CYS-201 AND 308-GLN--GLY-489 DEL</scope>
</reference>
<proteinExistence type="evidence at protein level"/>
<feature type="chain" id="PRO_0000307889" description="2-(3-amino-3-carboxypropyl)histidine synthase subunit 2">
    <location>
        <begin position="1"/>
        <end position="489"/>
    </location>
</feature>
<feature type="binding site" evidence="1">
    <location>
        <position position="89"/>
    </location>
    <ligand>
        <name>[4Fe-4S] cluster</name>
        <dbReference type="ChEBI" id="CHEBI:49883"/>
    </ligand>
</feature>
<feature type="binding site" evidence="1">
    <location>
        <position position="110"/>
    </location>
    <ligand>
        <name>[4Fe-4S] cluster</name>
        <dbReference type="ChEBI" id="CHEBI:49883"/>
    </ligand>
</feature>
<feature type="binding site" evidence="1">
    <location>
        <position position="341"/>
    </location>
    <ligand>
        <name>[4Fe-4S] cluster</name>
        <dbReference type="ChEBI" id="CHEBI:49883"/>
    </ligand>
</feature>
<feature type="modified residue" description="N-acetylmethionine" evidence="12">
    <location>
        <position position="1"/>
    </location>
</feature>
<feature type="modified residue" description="Phosphoserine" evidence="13">
    <location>
        <position position="7"/>
    </location>
</feature>
<feature type="modified residue" description="Phosphothreonine" evidence="8">
    <location>
        <position position="435"/>
    </location>
</feature>
<feature type="modified residue" description="Phosphoserine" evidence="8">
    <location>
        <position position="446"/>
    </location>
</feature>
<feature type="modified residue" description="Phosphoserine" evidence="13">
    <location>
        <position position="456"/>
    </location>
</feature>
<feature type="modified residue" description="Phosphothreonine" evidence="8 13">
    <location>
        <position position="467"/>
    </location>
</feature>
<feature type="modified residue" description="Phosphoserine" evidence="9 10 11">
    <location>
        <position position="488"/>
    </location>
</feature>
<feature type="splice variant" id="VSP_056052" description="In isoform 3." evidence="5">
    <original>MESMFSSPAEAALQRETGVPGLLTPL</original>
    <variation>MLWLWLHDWRRRQGQRCSFWVTQPTA</variation>
    <location>
        <begin position="1"/>
        <end position="26"/>
    </location>
</feature>
<feature type="splice variant" id="VSP_056053" description="In isoform 3." evidence="5">
    <location>
        <begin position="27"/>
        <end position="161"/>
    </location>
</feature>
<feature type="splice variant" id="VSP_047151" description="In isoform 2." evidence="6">
    <location>
        <begin position="162"/>
        <end position="389"/>
    </location>
</feature>
<feature type="sequence variant" id="VAR_086299" description="In DEDSSH2; severely impairs diphthamide modification of elongation factor 2; dbSNP:rs767455462." evidence="3">
    <original>R</original>
    <variation>C</variation>
    <location>
        <position position="201"/>
    </location>
</feature>
<feature type="sequence variant" id="VAR_086300" description="In DEDSSH2; severely impairs diphthamide modification of elongation factor 2; dbSNP:rs755058688." evidence="3">
    <location>
        <begin position="308"/>
        <end position="489"/>
    </location>
</feature>
<feature type="sequence conflict" description="In Ref. 1; AAC18086." evidence="6" ref="1">
    <original>RQRSVALELCVKAFEAQNPDPKAPVVLLS</original>
    <variation>SSTFCGLGTLCQDLWGPKPRPQSACGAAG</variation>
    <location>
        <begin position="125"/>
        <end position="153"/>
    </location>
</feature>
<feature type="sequence conflict" description="In Ref. 1; AAC18086." evidence="6" ref="1">
    <original>R</original>
    <variation>G</variation>
    <location>
        <position position="266"/>
    </location>
</feature>
<feature type="sequence conflict" description="In Ref. 1; AAC18086." evidence="6" ref="1">
    <original>T</original>
    <variation>N</variation>
    <location>
        <position position="435"/>
    </location>
</feature>
<feature type="sequence conflict" description="In Ref. 1; AAC18086." evidence="6" ref="1">
    <original>A</original>
    <variation>V</variation>
    <location>
        <position position="449"/>
    </location>
</feature>
<sequence length="489" mass="52083">MESMFSSPAEAALQRETGVPGLLTPLPDLDGVYELERVAGFVRDLGCERVALQFPDQLLGDAVAVAARLEETTGSKMFILGDTAYGSCCVDVLGAEQAGAQALIHFGPACLSPPARPLPVAFVLRQRSVALELCVKAFEAQNPDPKAPVVLLSEPACAHALEALATLLRPRYLDLLVSSPAFPQPVGSLSPEPMPLERFGRRFPLAPGRRLEEYGAFYVGGSKASPDPDLDPDLSRLLLGWAPGQPFSSCCPDTGKTQDEGARAGRLRARRRYLVERARDARVVGLLAGTLGVAQHREALAHLRNLTQAAGKRSYVLALGRPTPAKLANFPEVDVFVLLACPLGALAPQLSGSFFQPILAPCELEAACNPAWPPPGLAPHLTHYADLLPGSPFHVALPPPESELWETPDVSLITGDLRPPPAWKSSNDHGSLALTPRPQLELAESSPAASFLSSRSWQGLEPRLGQTPVTEAVSGRRGIAIAYEDEGSG</sequence>
<protein>
    <recommendedName>
        <fullName evidence="6">2-(3-amino-3-carboxypropyl)histidine synthase subunit 2</fullName>
    </recommendedName>
    <alternativeName>
        <fullName>Diphthamide biosynthesis protein 2</fullName>
    </alternativeName>
    <alternativeName>
        <fullName evidence="6">Diphtheria toxin resistance protein 2</fullName>
    </alternativeName>
    <alternativeName>
        <fullName evidence="6">S-adenosyl-L-methionine:L-histidine 3-amino-3-carboxypropyltransferase 2</fullName>
    </alternativeName>
</protein>
<name>DPH2_HUMAN</name>
<dbReference type="EMBL" id="AF053003">
    <property type="protein sequence ID" value="AAC18086.1"/>
    <property type="molecule type" value="mRNA"/>
</dbReference>
<dbReference type="EMBL" id="AK297933">
    <property type="protein sequence ID" value="BAG60250.1"/>
    <property type="molecule type" value="mRNA"/>
</dbReference>
<dbReference type="EMBL" id="AK315506">
    <property type="protein sequence ID" value="BAG37890.1"/>
    <property type="molecule type" value="mRNA"/>
</dbReference>
<dbReference type="EMBL" id="BT007431">
    <property type="protein sequence ID" value="AAP36099.1"/>
    <property type="molecule type" value="mRNA"/>
</dbReference>
<dbReference type="EMBL" id="AL357079">
    <property type="status" value="NOT_ANNOTATED_CDS"/>
    <property type="molecule type" value="Genomic_DNA"/>
</dbReference>
<dbReference type="EMBL" id="CH471059">
    <property type="protein sequence ID" value="EAX07070.1"/>
    <property type="molecule type" value="Genomic_DNA"/>
</dbReference>
<dbReference type="EMBL" id="BC001389">
    <property type="protein sequence ID" value="AAH01389.1"/>
    <property type="molecule type" value="mRNA"/>
</dbReference>
<dbReference type="EMBL" id="BC003181">
    <property type="protein sequence ID" value="AAH03181.1"/>
    <property type="molecule type" value="mRNA"/>
</dbReference>
<dbReference type="EMBL" id="BC016956">
    <property type="protein sequence ID" value="AAH16956.1"/>
    <property type="molecule type" value="mRNA"/>
</dbReference>
<dbReference type="CCDS" id="CCDS41314.1">
    <molecule id="Q9BQC3-2"/>
</dbReference>
<dbReference type="CCDS" id="CCDS504.1">
    <molecule id="Q9BQC3-1"/>
</dbReference>
<dbReference type="RefSeq" id="NP_001034678.1">
    <molecule id="Q9BQC3-2"/>
    <property type="nucleotide sequence ID" value="NM_001039589.2"/>
</dbReference>
<dbReference type="RefSeq" id="NP_001306095.1">
    <property type="nucleotide sequence ID" value="NM_001319166.1"/>
</dbReference>
<dbReference type="RefSeq" id="NP_001306098.1">
    <molecule id="Q9BQC3-3"/>
    <property type="nucleotide sequence ID" value="NM_001319169.2"/>
</dbReference>
<dbReference type="RefSeq" id="NP_001375.2">
    <molecule id="Q9BQC3-1"/>
    <property type="nucleotide sequence ID" value="NM_001384.4"/>
</dbReference>
<dbReference type="SMR" id="Q9BQC3"/>
<dbReference type="BioGRID" id="108136">
    <property type="interactions" value="55"/>
</dbReference>
<dbReference type="ComplexPortal" id="CPX-7849">
    <property type="entry name" value="2-(3-amino-3-carboxypropyl)histidine synthase complex"/>
</dbReference>
<dbReference type="FunCoup" id="Q9BQC3">
    <property type="interactions" value="1547"/>
</dbReference>
<dbReference type="IntAct" id="Q9BQC3">
    <property type="interactions" value="25"/>
</dbReference>
<dbReference type="STRING" id="9606.ENSP00000255108"/>
<dbReference type="GlyCosmos" id="Q9BQC3">
    <property type="glycosylation" value="1 site, 1 glycan"/>
</dbReference>
<dbReference type="GlyGen" id="Q9BQC3">
    <property type="glycosylation" value="4 sites, 1 N-linked glycan (1 site), 1 O-linked glycan (3 sites)"/>
</dbReference>
<dbReference type="iPTMnet" id="Q9BQC3"/>
<dbReference type="PhosphoSitePlus" id="Q9BQC3"/>
<dbReference type="BioMuta" id="DPH2"/>
<dbReference type="DMDM" id="74761201"/>
<dbReference type="jPOST" id="Q9BQC3"/>
<dbReference type="MassIVE" id="Q9BQC3"/>
<dbReference type="PaxDb" id="9606-ENSP00000255108"/>
<dbReference type="PeptideAtlas" id="Q9BQC3"/>
<dbReference type="ProteomicsDB" id="2169"/>
<dbReference type="ProteomicsDB" id="4698"/>
<dbReference type="ProteomicsDB" id="78655">
    <molecule id="Q9BQC3-1"/>
</dbReference>
<dbReference type="Pumba" id="Q9BQC3"/>
<dbReference type="Antibodypedia" id="32411">
    <property type="antibodies" value="403 antibodies from 25 providers"/>
</dbReference>
<dbReference type="DNASU" id="1802"/>
<dbReference type="Ensembl" id="ENST00000255108.8">
    <molecule id="Q9BQC3-1"/>
    <property type="protein sequence ID" value="ENSP00000255108.3"/>
    <property type="gene ID" value="ENSG00000132768.14"/>
</dbReference>
<dbReference type="Ensembl" id="ENST00000396758.6">
    <molecule id="Q9BQC3-2"/>
    <property type="protein sequence ID" value="ENSP00000379981.2"/>
    <property type="gene ID" value="ENSG00000132768.14"/>
</dbReference>
<dbReference type="GeneID" id="1802"/>
<dbReference type="KEGG" id="hsa:1802"/>
<dbReference type="MANE-Select" id="ENST00000255108.8">
    <property type="protein sequence ID" value="ENSP00000255108.3"/>
    <property type="RefSeq nucleotide sequence ID" value="NM_001384.5"/>
    <property type="RefSeq protein sequence ID" value="NP_001375.2"/>
</dbReference>
<dbReference type="UCSC" id="uc001ckz.4">
    <molecule id="Q9BQC3-1"/>
    <property type="organism name" value="human"/>
</dbReference>
<dbReference type="AGR" id="HGNC:3004"/>
<dbReference type="CTD" id="1802"/>
<dbReference type="DisGeNET" id="1802"/>
<dbReference type="GeneCards" id="DPH2"/>
<dbReference type="HGNC" id="HGNC:3004">
    <property type="gene designation" value="DPH2"/>
</dbReference>
<dbReference type="HPA" id="ENSG00000132768">
    <property type="expression patterns" value="Low tissue specificity"/>
</dbReference>
<dbReference type="MalaCards" id="DPH2"/>
<dbReference type="MIM" id="603456">
    <property type="type" value="gene"/>
</dbReference>
<dbReference type="MIM" id="620062">
    <property type="type" value="phenotype"/>
</dbReference>
<dbReference type="neXtProt" id="NX_Q9BQC3"/>
<dbReference type="OpenTargets" id="ENSG00000132768"/>
<dbReference type="Orphanet" id="459061">
    <property type="disease" value="Craniofacial dysplasia-short stature-ectodermal anomalies-intellectual disability syndrome"/>
</dbReference>
<dbReference type="PharmGKB" id="PA27462"/>
<dbReference type="VEuPathDB" id="HostDB:ENSG00000132768"/>
<dbReference type="eggNOG" id="KOG2648">
    <property type="taxonomic scope" value="Eukaryota"/>
</dbReference>
<dbReference type="GeneTree" id="ENSGT00940000153694"/>
<dbReference type="HOGENOM" id="CLU_884407_0_0_1"/>
<dbReference type="InParanoid" id="Q9BQC3"/>
<dbReference type="OMA" id="QIWNENH"/>
<dbReference type="OrthoDB" id="449241at2759"/>
<dbReference type="PAN-GO" id="Q9BQC3">
    <property type="GO annotations" value="1 GO annotation based on evolutionary models"/>
</dbReference>
<dbReference type="PhylomeDB" id="Q9BQC3"/>
<dbReference type="TreeFam" id="TF313832"/>
<dbReference type="PathwayCommons" id="Q9BQC3"/>
<dbReference type="Reactome" id="R-HSA-5358493">
    <property type="pathway name" value="Synthesis of diphthamide-EEF2"/>
</dbReference>
<dbReference type="SignaLink" id="Q9BQC3"/>
<dbReference type="UniPathway" id="UPA00559"/>
<dbReference type="BioGRID-ORCS" id="1802">
    <property type="hits" value="223 hits in 1168 CRISPR screens"/>
</dbReference>
<dbReference type="ChiTaRS" id="DPH2">
    <property type="organism name" value="human"/>
</dbReference>
<dbReference type="GenomeRNAi" id="1802"/>
<dbReference type="Pharos" id="Q9BQC3">
    <property type="development level" value="Tbio"/>
</dbReference>
<dbReference type="PRO" id="PR:Q9BQC3"/>
<dbReference type="Proteomes" id="UP000005640">
    <property type="component" value="Chromosome 1"/>
</dbReference>
<dbReference type="RNAct" id="Q9BQC3">
    <property type="molecule type" value="protein"/>
</dbReference>
<dbReference type="Bgee" id="ENSG00000132768">
    <property type="expression patterns" value="Expressed in gastrocnemius and 175 other cell types or tissues"/>
</dbReference>
<dbReference type="ExpressionAtlas" id="Q9BQC3">
    <property type="expression patterns" value="baseline and differential"/>
</dbReference>
<dbReference type="GO" id="GO:0120513">
    <property type="term" value="C:2-(3-amino-3-carboxypropyl)histidine synthase complex"/>
    <property type="evidence" value="ECO:0000250"/>
    <property type="project" value="UniProtKB"/>
</dbReference>
<dbReference type="GO" id="GO:0005829">
    <property type="term" value="C:cytosol"/>
    <property type="evidence" value="ECO:0000304"/>
    <property type="project" value="Reactome"/>
</dbReference>
<dbReference type="GO" id="GO:0090560">
    <property type="term" value="F:2-(3-amino-3-carboxypropyl)histidine synthase activity"/>
    <property type="evidence" value="ECO:0000269"/>
    <property type="project" value="Reactome"/>
</dbReference>
<dbReference type="GO" id="GO:0051539">
    <property type="term" value="F:4 iron, 4 sulfur cluster binding"/>
    <property type="evidence" value="ECO:0000250"/>
    <property type="project" value="UniProtKB"/>
</dbReference>
<dbReference type="GO" id="GO:0046872">
    <property type="term" value="F:metal ion binding"/>
    <property type="evidence" value="ECO:0007669"/>
    <property type="project" value="UniProtKB-KW"/>
</dbReference>
<dbReference type="GO" id="GO:0017183">
    <property type="term" value="P:protein histidyl modification to diphthamide"/>
    <property type="evidence" value="ECO:0000315"/>
    <property type="project" value="UniProtKB"/>
</dbReference>
<dbReference type="FunFam" id="3.40.50.11840:FF:000002">
    <property type="entry name" value="2-(3-amino-3-carboxypropyl)histidine synthase subunit 2"/>
    <property type="match status" value="1"/>
</dbReference>
<dbReference type="FunFam" id="3.40.50.11860:FF:000001">
    <property type="entry name" value="2-(3-amino-3-carboxypropyl)histidine synthase subunit 2"/>
    <property type="match status" value="1"/>
</dbReference>
<dbReference type="Gene3D" id="3.40.50.11840">
    <property type="entry name" value="Diphthamide synthesis DPH1/DPH2 domain 1"/>
    <property type="match status" value="1"/>
</dbReference>
<dbReference type="Gene3D" id="3.40.50.11860">
    <property type="entry name" value="Diphthamide synthesis DPH1/DPH2 domain 3"/>
    <property type="match status" value="1"/>
</dbReference>
<dbReference type="InterPro" id="IPR010014">
    <property type="entry name" value="DHP2"/>
</dbReference>
<dbReference type="InterPro" id="IPR016435">
    <property type="entry name" value="DPH1/DPH2"/>
</dbReference>
<dbReference type="InterPro" id="IPR042263">
    <property type="entry name" value="DPH1/DPH2_1"/>
</dbReference>
<dbReference type="InterPro" id="IPR042265">
    <property type="entry name" value="DPH1/DPH2_3"/>
</dbReference>
<dbReference type="NCBIfam" id="TIGR00322">
    <property type="entry name" value="diphth2_R"/>
    <property type="match status" value="1"/>
</dbReference>
<dbReference type="NCBIfam" id="TIGR00272">
    <property type="entry name" value="DPH2"/>
    <property type="match status" value="1"/>
</dbReference>
<dbReference type="PANTHER" id="PTHR10762:SF2">
    <property type="entry name" value="2-(3-AMINO-3-CARBOXYPROPYL)HISTIDINE SYNTHASE SUBUNIT 2"/>
    <property type="match status" value="1"/>
</dbReference>
<dbReference type="PANTHER" id="PTHR10762">
    <property type="entry name" value="DIPHTHAMIDE BIOSYNTHESIS PROTEIN"/>
    <property type="match status" value="1"/>
</dbReference>
<dbReference type="Pfam" id="PF01866">
    <property type="entry name" value="Diphthamide_syn"/>
    <property type="match status" value="1"/>
</dbReference>
<dbReference type="SFLD" id="SFLDG01121">
    <property type="entry name" value="Diphthamide_biosynthesis"/>
    <property type="match status" value="1"/>
</dbReference>
<dbReference type="SFLD" id="SFLDF00408">
    <property type="entry name" value="Diphthamide_biosynthesis_famil"/>
    <property type="match status" value="1"/>
</dbReference>
<dbReference type="SFLD" id="SFLDS00032">
    <property type="entry name" value="Radical_SAM_3-amino-3-carboxyp"/>
    <property type="match status" value="1"/>
</dbReference>
<keyword id="KW-0007">Acetylation</keyword>
<keyword id="KW-0025">Alternative splicing</keyword>
<keyword id="KW-0225">Disease variant</keyword>
<keyword id="KW-0242">Dwarfism</keyword>
<keyword id="KW-0038">Ectodermal dysplasia</keyword>
<keyword id="KW-1063">Hypotrichosis</keyword>
<keyword id="KW-0991">Intellectual disability</keyword>
<keyword id="KW-0408">Iron</keyword>
<keyword id="KW-0411">Iron-sulfur</keyword>
<keyword id="KW-0479">Metal-binding</keyword>
<keyword id="KW-0597">Phosphoprotein</keyword>
<keyword id="KW-1267">Proteomics identification</keyword>
<keyword id="KW-1185">Reference proteome</keyword>
<organism>
    <name type="scientific">Homo sapiens</name>
    <name type="common">Human</name>
    <dbReference type="NCBI Taxonomy" id="9606"/>
    <lineage>
        <taxon>Eukaryota</taxon>
        <taxon>Metazoa</taxon>
        <taxon>Chordata</taxon>
        <taxon>Craniata</taxon>
        <taxon>Vertebrata</taxon>
        <taxon>Euteleostomi</taxon>
        <taxon>Mammalia</taxon>
        <taxon>Eutheria</taxon>
        <taxon>Euarchontoglires</taxon>
        <taxon>Primates</taxon>
        <taxon>Haplorrhini</taxon>
        <taxon>Catarrhini</taxon>
        <taxon>Hominidae</taxon>
        <taxon>Homo</taxon>
    </lineage>
</organism>
<comment type="function">
    <text evidence="1 3">Required for the first step of diphthamide biosynthesis, a post-translational modification of histidine which occurs in elongation factor 2 (PubMed:32576952). DPH1 and DPH2 transfer a 3-amino-3-carboxypropyl (ACP) group from S-adenosyl-L-methionine (SAM) to a histidine residue, the reaction is assisted by a reduction system comprising DPH3 and a NADH-dependent reductase (By similarity). Facilitates the reduction of the catalytic iron-sulfur cluster found in the DPH1 subunit (By similarity).</text>
</comment>
<comment type="cofactor">
    <cofactor evidence="1">
        <name>[4Fe-4S] cluster</name>
        <dbReference type="ChEBI" id="CHEBI:49883"/>
    </cofactor>
    <text evidence="1">Binds 1 [4Fe-4S] cluster per subunit. The cluster facilitates the reduction of the catalytic iron-sulfur cluster in the DPH1 subunit.</text>
</comment>
<comment type="pathway">
    <text evidence="7">Protein modification; peptidyl-diphthamide biosynthesis.</text>
</comment>
<comment type="subunit">
    <text evidence="1 2">Component of the 2-(3-amino-3-carboxypropyl)histidine synthase complex composed of DPH1, DPH2, DPH3 and a NADH-dependent reductase (By similarity). Interacts with DPH1 (By similarity).</text>
</comment>
<comment type="interaction">
    <interactant intactId="EBI-10237931">
        <id>Q9BQC3</id>
    </interactant>
    <interactant intactId="EBI-10239205">
        <id>Q24JT5</id>
        <label>CRYGA</label>
    </interactant>
    <organismsDiffer>false</organismsDiffer>
    <experiments>3</experiments>
</comment>
<comment type="interaction">
    <interactant intactId="EBI-10237931">
        <id>Q9BQC3</id>
    </interactant>
    <interactant intactId="EBI-2513774">
        <id>O95363</id>
        <label>FARS2</label>
    </interactant>
    <organismsDiffer>false</organismsDiffer>
    <experiments>3</experiments>
</comment>
<comment type="interaction">
    <interactant intactId="EBI-10237931">
        <id>Q9BQC3</id>
    </interactant>
    <interactant intactId="EBI-10237926">
        <id>Q16552</id>
        <label>IL17A</label>
    </interactant>
    <organismsDiffer>false</organismsDiffer>
    <experiments>3</experiments>
</comment>
<comment type="interaction">
    <interactant intactId="EBI-10237931">
        <id>Q9BQC3</id>
    </interactant>
    <interactant intactId="EBI-299134">
        <id>P61326</id>
        <label>MAGOH</label>
    </interactant>
    <organismsDiffer>false</organismsDiffer>
    <experiments>3</experiments>
</comment>
<comment type="interaction">
    <interactant intactId="EBI-10237931">
        <id>Q9BQC3</id>
    </interactant>
    <interactant intactId="EBI-2555085">
        <id>Q8IVT2</id>
        <label>MISP</label>
    </interactant>
    <organismsDiffer>false</organismsDiffer>
    <experiments>3</experiments>
</comment>
<comment type="interaction">
    <interactant intactId="EBI-10237931">
        <id>Q9BQC3</id>
    </interactant>
    <interactant intactId="EBI-11750983">
        <id>Q9HC98-4</id>
        <label>NEK6</label>
    </interactant>
    <organismsDiffer>false</organismsDiffer>
    <experiments>3</experiments>
</comment>
<comment type="interaction">
    <interactant intactId="EBI-10237931">
        <id>Q9BQC3</id>
    </interactant>
    <interactant intactId="EBI-11994780">
        <id>Q07912-2</id>
        <label>TNK2</label>
    </interactant>
    <organismsDiffer>false</organismsDiffer>
    <experiments>3</experiments>
</comment>
<comment type="alternative products">
    <event type="alternative splicing"/>
    <isoform>
        <id>Q9BQC3-1</id>
        <name>1</name>
        <sequence type="displayed"/>
    </isoform>
    <isoform>
        <id>Q9BQC3-2</id>
        <name>2</name>
        <sequence type="described" ref="VSP_047151"/>
    </isoform>
    <isoform>
        <id>Q9BQC3-3</id>
        <name>3</name>
        <sequence type="described" ref="VSP_056052 VSP_056053"/>
    </isoform>
</comment>
<comment type="tissue specificity">
    <text evidence="4">Strongly expressed in skeletal muscle. Moderately expressed in heart, small intestine, liver, pancreas, testis and colon. Weakly expressed in brain, placenta, kidney, spleen, thymus, prostate, ovary and lymphocytes.</text>
</comment>
<comment type="disease" evidence="3">
    <disease id="DI-06516">
        <name>Developmental delay with short stature, dysmorphic facial features, and sparse hair 2</name>
        <acronym>DEDSSH2</acronym>
        <description>An autosomal recessive syndrome characterized by developmental delay with variably impaired intellectual development and speech delay, short stature, abnormal head circumference, dysmorphic facial features, and sparse scalp hair. Affected individuals may have other abnormalities, including congenital cardiac defects and distal skeletal anomalies.</description>
        <dbReference type="MIM" id="620062"/>
    </disease>
    <text>The disease is caused by variants affecting the gene represented in this entry.</text>
</comment>
<comment type="similarity">
    <text evidence="6">Belongs to the DPH1/DPH2 family. DPH2 subfamily.</text>
</comment>
<accession>Q9BQC3</accession>
<accession>A8MVC9</accession>
<accession>B2RDE3</accession>
<accession>B4DNI8</accession>
<accession>O60623</accession>